<accession>Q7S6U4</accession>
<name>CVNH_NEUCR</name>
<reference key="1">
    <citation type="journal article" date="2003" name="Nature">
        <title>The genome sequence of the filamentous fungus Neurospora crassa.</title>
        <authorList>
            <person name="Galagan J.E."/>
            <person name="Calvo S.E."/>
            <person name="Borkovich K.A."/>
            <person name="Selker E.U."/>
            <person name="Read N.D."/>
            <person name="Jaffe D.B."/>
            <person name="FitzHugh W."/>
            <person name="Ma L.-J."/>
            <person name="Smirnov S."/>
            <person name="Purcell S."/>
            <person name="Rehman B."/>
            <person name="Elkins T."/>
            <person name="Engels R."/>
            <person name="Wang S."/>
            <person name="Nielsen C.B."/>
            <person name="Butler J."/>
            <person name="Endrizzi M."/>
            <person name="Qui D."/>
            <person name="Ianakiev P."/>
            <person name="Bell-Pedersen D."/>
            <person name="Nelson M.A."/>
            <person name="Werner-Washburne M."/>
            <person name="Selitrennikoff C.P."/>
            <person name="Kinsey J.A."/>
            <person name="Braun E.L."/>
            <person name="Zelter A."/>
            <person name="Schulte U."/>
            <person name="Kothe G.O."/>
            <person name="Jedd G."/>
            <person name="Mewes H.-W."/>
            <person name="Staben C."/>
            <person name="Marcotte E."/>
            <person name="Greenberg D."/>
            <person name="Roy A."/>
            <person name="Foley K."/>
            <person name="Naylor J."/>
            <person name="Stange-Thomann N."/>
            <person name="Barrett R."/>
            <person name="Gnerre S."/>
            <person name="Kamal M."/>
            <person name="Kamvysselis M."/>
            <person name="Mauceli E.W."/>
            <person name="Bielke C."/>
            <person name="Rudd S."/>
            <person name="Frishman D."/>
            <person name="Krystofova S."/>
            <person name="Rasmussen C."/>
            <person name="Metzenberg R.L."/>
            <person name="Perkins D.D."/>
            <person name="Kroken S."/>
            <person name="Cogoni C."/>
            <person name="Macino G."/>
            <person name="Catcheside D.E.A."/>
            <person name="Li W."/>
            <person name="Pratt R.J."/>
            <person name="Osmani S.A."/>
            <person name="DeSouza C.P.C."/>
            <person name="Glass N.L."/>
            <person name="Orbach M.J."/>
            <person name="Berglund J.A."/>
            <person name="Voelker R."/>
            <person name="Yarden O."/>
            <person name="Plamann M."/>
            <person name="Seiler S."/>
            <person name="Dunlap J.C."/>
            <person name="Radford A."/>
            <person name="Aramayo R."/>
            <person name="Natvig D.O."/>
            <person name="Alex L.A."/>
            <person name="Mannhaupt G."/>
            <person name="Ebbole D.J."/>
            <person name="Freitag M."/>
            <person name="Paulsen I."/>
            <person name="Sachs M.S."/>
            <person name="Lander E.S."/>
            <person name="Nusbaum C."/>
            <person name="Birren B.W."/>
        </authorList>
    </citation>
    <scope>NUCLEOTIDE SEQUENCE [LARGE SCALE GENOMIC DNA]</scope>
    <source>
        <strain>ATCC 24698 / 74-OR23-1A / CBS 708.71 / DSM 1257 / FGSC 987</strain>
    </source>
</reference>
<reference evidence="3" key="2">
    <citation type="journal article" date="2008" name="Structure">
        <title>The evolutionarily conserved family of cyanovirin-N homologs: structures and carbohydrate specificity.</title>
        <authorList>
            <person name="Koharudin L.M.I."/>
            <person name="Viscomi A.R."/>
            <person name="Jee J.-G."/>
            <person name="Ottonello S."/>
            <person name="Gronenborn A.M."/>
        </authorList>
    </citation>
    <scope>STRUCTURE BY NMR</scope>
    <scope>FUNCTION</scope>
</reference>
<evidence type="ECO:0000269" key="1">
    <source>
    </source>
</evidence>
<evidence type="ECO:0000303" key="2">
    <source>
    </source>
</evidence>
<evidence type="ECO:0000305" key="3"/>
<evidence type="ECO:0007829" key="4">
    <source>
        <dbReference type="PDB" id="2JZL"/>
    </source>
</evidence>
<evidence type="ECO:0007829" key="5">
    <source>
        <dbReference type="PDB" id="3HNX"/>
    </source>
</evidence>
<organism>
    <name type="scientific">Neurospora crassa (strain ATCC 24698 / 74-OR23-1A / CBS 708.71 / DSM 1257 / FGSC 987)</name>
    <dbReference type="NCBI Taxonomy" id="367110"/>
    <lineage>
        <taxon>Eukaryota</taxon>
        <taxon>Fungi</taxon>
        <taxon>Dikarya</taxon>
        <taxon>Ascomycota</taxon>
        <taxon>Pezizomycotina</taxon>
        <taxon>Sordariomycetes</taxon>
        <taxon>Sordariomycetidae</taxon>
        <taxon>Sordariales</taxon>
        <taxon>Sordariaceae</taxon>
        <taxon>Neurospora</taxon>
    </lineage>
</organism>
<dbReference type="EMBL" id="CM002241">
    <property type="protein sequence ID" value="EAA31221.2"/>
    <property type="molecule type" value="Genomic_DNA"/>
</dbReference>
<dbReference type="PDB" id="2JZL">
    <property type="method" value="NMR"/>
    <property type="chains" value="A=1-111"/>
</dbReference>
<dbReference type="PDB" id="2KJL">
    <property type="method" value="NMR"/>
    <property type="chains" value="A=42-95"/>
</dbReference>
<dbReference type="PDB" id="3HNU">
    <property type="method" value="X-ray"/>
    <property type="resolution" value="1.56 A"/>
    <property type="chains" value="X=42-95"/>
</dbReference>
<dbReference type="PDB" id="3HNX">
    <property type="method" value="X-ray"/>
    <property type="resolution" value="1.37 A"/>
    <property type="chains" value="A=42-95"/>
</dbReference>
<dbReference type="PDB" id="3HP8">
    <property type="method" value="X-ray"/>
    <property type="resolution" value="2.00 A"/>
    <property type="chains" value="A/B=42-95"/>
</dbReference>
<dbReference type="PDBsum" id="2JZL"/>
<dbReference type="PDBsum" id="2KJL"/>
<dbReference type="PDBsum" id="3HNU"/>
<dbReference type="PDBsum" id="3HNX"/>
<dbReference type="PDBsum" id="3HP8"/>
<dbReference type="SMR" id="Q7S6U4"/>
<dbReference type="STRING" id="367110.Q7S6U4"/>
<dbReference type="UniLectin" id="Q7S6U4"/>
<dbReference type="PaxDb" id="5141-EFNCRP00000005540"/>
<dbReference type="EnsemblFungi" id="EAA31221">
    <property type="protein sequence ID" value="EAA31221"/>
    <property type="gene ID" value="NCU05495"/>
</dbReference>
<dbReference type="KEGG" id="ncr:NCU05495"/>
<dbReference type="VEuPathDB" id="FungiDB:NCU05495"/>
<dbReference type="HOGENOM" id="CLU_144945_0_0_1"/>
<dbReference type="InParanoid" id="Q7S6U4"/>
<dbReference type="OMA" id="EWNDSEI"/>
<dbReference type="OrthoDB" id="2441380at2759"/>
<dbReference type="EvolutionaryTrace" id="Q7S6U4"/>
<dbReference type="Proteomes" id="UP000001805">
    <property type="component" value="Chromosome 5, Linkage Group VI"/>
</dbReference>
<dbReference type="GO" id="GO:0030246">
    <property type="term" value="F:carbohydrate binding"/>
    <property type="evidence" value="ECO:0007669"/>
    <property type="project" value="UniProtKB-KW"/>
</dbReference>
<dbReference type="Gene3D" id="2.30.60.10">
    <property type="entry name" value="Cyanovirin-N"/>
    <property type="match status" value="1"/>
</dbReference>
<dbReference type="InterPro" id="IPR011058">
    <property type="entry name" value="Cyanovirin-N"/>
</dbReference>
<dbReference type="InterPro" id="IPR036673">
    <property type="entry name" value="Cyanovirin-N_sf"/>
</dbReference>
<dbReference type="PANTHER" id="PTHR42076:SF1">
    <property type="entry name" value="CYANOVIRIN-N DOMAIN-CONTAINING PROTEIN"/>
    <property type="match status" value="1"/>
</dbReference>
<dbReference type="PANTHER" id="PTHR42076">
    <property type="entry name" value="CYANOVIRIN-N HOMOLOG"/>
    <property type="match status" value="1"/>
</dbReference>
<dbReference type="Pfam" id="PF08881">
    <property type="entry name" value="CVNH"/>
    <property type="match status" value="1"/>
</dbReference>
<dbReference type="SMART" id="SM01111">
    <property type="entry name" value="CVNH"/>
    <property type="match status" value="1"/>
</dbReference>
<dbReference type="SUPFAM" id="SSF51322">
    <property type="entry name" value="Cyanovirin-N"/>
    <property type="match status" value="1"/>
</dbReference>
<comment type="function">
    <text evidence="1">Mannose-binding lectin.</text>
</comment>
<comment type="similarity">
    <text evidence="3">Belongs to the cyanovirin-N family.</text>
</comment>
<gene>
    <name type="ORF">NCU05495</name>
</gene>
<feature type="chain" id="PRO_0000381732" description="Cyanovirin-N homolog">
    <location>
        <begin position="1"/>
        <end position="111"/>
    </location>
</feature>
<feature type="strand" evidence="4">
    <location>
        <begin position="3"/>
        <end position="5"/>
    </location>
</feature>
<feature type="strand" evidence="4">
    <location>
        <begin position="11"/>
        <end position="15"/>
    </location>
</feature>
<feature type="strand" evidence="4">
    <location>
        <begin position="18"/>
        <end position="26"/>
    </location>
</feature>
<feature type="strand" evidence="4">
    <location>
        <begin position="32"/>
        <end position="38"/>
    </location>
</feature>
<feature type="helix" evidence="4">
    <location>
        <begin position="39"/>
        <end position="41"/>
    </location>
</feature>
<feature type="strand" evidence="5">
    <location>
        <begin position="43"/>
        <end position="46"/>
    </location>
</feature>
<feature type="strand" evidence="5">
    <location>
        <begin position="49"/>
        <end position="52"/>
    </location>
</feature>
<feature type="helix" evidence="5">
    <location>
        <begin position="57"/>
        <end position="60"/>
    </location>
</feature>
<feature type="strand" evidence="5">
    <location>
        <begin position="61"/>
        <end position="70"/>
    </location>
</feature>
<feature type="turn" evidence="5">
    <location>
        <begin position="71"/>
        <end position="74"/>
    </location>
</feature>
<feature type="strand" evidence="5">
    <location>
        <begin position="75"/>
        <end position="83"/>
    </location>
</feature>
<feature type="strand" evidence="5">
    <location>
        <begin position="89"/>
        <end position="95"/>
    </location>
</feature>
<feature type="turn" evidence="4">
    <location>
        <begin position="97"/>
        <end position="99"/>
    </location>
</feature>
<feature type="strand" evidence="4">
    <location>
        <begin position="100"/>
        <end position="105"/>
    </location>
</feature>
<feature type="strand" evidence="4">
    <location>
        <begin position="107"/>
        <end position="109"/>
    </location>
</feature>
<proteinExistence type="evidence at protein level"/>
<sequence>MSFHVTAEDARIEVRDNRTILFARLRREDGEWNDASYELDQIIGNNDGHFQWGGQNFTETAEDIRFHPKEGAAEQPILRARLRDCNGEFHDRDVNLTEIVENVNGEFQAKF</sequence>
<protein>
    <recommendedName>
        <fullName evidence="2">Cyanovirin-N homolog</fullName>
        <shortName evidence="2">CV-N homolog</shortName>
    </recommendedName>
</protein>
<keyword id="KW-0002">3D-structure</keyword>
<keyword id="KW-0430">Lectin</keyword>
<keyword id="KW-1185">Reference proteome</keyword>